<keyword id="KW-0687">Ribonucleoprotein</keyword>
<keyword id="KW-0689">Ribosomal protein</keyword>
<keyword id="KW-0694">RNA-binding</keyword>
<keyword id="KW-0699">rRNA-binding</keyword>
<proteinExistence type="inferred from homology"/>
<organism>
    <name type="scientific">Bartonella quintana (strain Toulouse)</name>
    <name type="common">Rochalimaea quintana</name>
    <dbReference type="NCBI Taxonomy" id="283165"/>
    <lineage>
        <taxon>Bacteria</taxon>
        <taxon>Pseudomonadati</taxon>
        <taxon>Pseudomonadota</taxon>
        <taxon>Alphaproteobacteria</taxon>
        <taxon>Hyphomicrobiales</taxon>
        <taxon>Bartonellaceae</taxon>
        <taxon>Bartonella</taxon>
    </lineage>
</organism>
<comment type="function">
    <text evidence="1">Binds 16S rRNA, required for the assembly of 30S particles and may also be responsible for determining the conformation of the 16S rRNA at the A site.</text>
</comment>
<comment type="subunit">
    <text evidence="1">Part of the 30S ribosomal subunit. Contacts proteins S3 and S10.</text>
</comment>
<comment type="similarity">
    <text evidence="1">Belongs to the universal ribosomal protein uS14 family.</text>
</comment>
<feature type="chain" id="PRO_1000128309" description="Small ribosomal subunit protein uS14">
    <location>
        <begin position="1"/>
        <end position="101"/>
    </location>
</feature>
<reference key="1">
    <citation type="journal article" date="2004" name="Proc. Natl. Acad. Sci. U.S.A.">
        <title>The louse-borne human pathogen Bartonella quintana is a genomic derivative of the zoonotic agent Bartonella henselae.</title>
        <authorList>
            <person name="Alsmark U.C.M."/>
            <person name="Frank A.C."/>
            <person name="Karlberg E.O."/>
            <person name="Legault B.-A."/>
            <person name="Ardell D.H."/>
            <person name="Canbaeck B."/>
            <person name="Eriksson A.-S."/>
            <person name="Naeslund A.K."/>
            <person name="Handley S.A."/>
            <person name="Huvet M."/>
            <person name="La Scola B."/>
            <person name="Holmberg M."/>
            <person name="Andersson S.G.E."/>
        </authorList>
    </citation>
    <scope>NUCLEOTIDE SEQUENCE [LARGE SCALE GENOMIC DNA]</scope>
    <source>
        <strain>Toulouse</strain>
    </source>
</reference>
<name>RS14_BARQU</name>
<dbReference type="EMBL" id="BX897700">
    <property type="protein sequence ID" value="CAF26293.1"/>
    <property type="molecule type" value="Genomic_DNA"/>
</dbReference>
<dbReference type="RefSeq" id="WP_011179540.1">
    <property type="nucleotide sequence ID" value="NC_005955.1"/>
</dbReference>
<dbReference type="SMR" id="Q6FZD5"/>
<dbReference type="KEGG" id="bqu:BQ08100"/>
<dbReference type="eggNOG" id="COG0199">
    <property type="taxonomic scope" value="Bacteria"/>
</dbReference>
<dbReference type="HOGENOM" id="CLU_139869_0_1_5"/>
<dbReference type="OrthoDB" id="9810484at2"/>
<dbReference type="Proteomes" id="UP000000597">
    <property type="component" value="Chromosome"/>
</dbReference>
<dbReference type="GO" id="GO:0005737">
    <property type="term" value="C:cytoplasm"/>
    <property type="evidence" value="ECO:0007669"/>
    <property type="project" value="UniProtKB-ARBA"/>
</dbReference>
<dbReference type="GO" id="GO:0015935">
    <property type="term" value="C:small ribosomal subunit"/>
    <property type="evidence" value="ECO:0007669"/>
    <property type="project" value="TreeGrafter"/>
</dbReference>
<dbReference type="GO" id="GO:0019843">
    <property type="term" value="F:rRNA binding"/>
    <property type="evidence" value="ECO:0007669"/>
    <property type="project" value="UniProtKB-UniRule"/>
</dbReference>
<dbReference type="GO" id="GO:0003735">
    <property type="term" value="F:structural constituent of ribosome"/>
    <property type="evidence" value="ECO:0007669"/>
    <property type="project" value="InterPro"/>
</dbReference>
<dbReference type="GO" id="GO:0006412">
    <property type="term" value="P:translation"/>
    <property type="evidence" value="ECO:0007669"/>
    <property type="project" value="UniProtKB-UniRule"/>
</dbReference>
<dbReference type="FunFam" id="1.10.287.1480:FF:000001">
    <property type="entry name" value="30S ribosomal protein S14"/>
    <property type="match status" value="1"/>
</dbReference>
<dbReference type="Gene3D" id="1.10.287.1480">
    <property type="match status" value="1"/>
</dbReference>
<dbReference type="HAMAP" id="MF_00537">
    <property type="entry name" value="Ribosomal_uS14_1"/>
    <property type="match status" value="1"/>
</dbReference>
<dbReference type="InterPro" id="IPR001209">
    <property type="entry name" value="Ribosomal_uS14"/>
</dbReference>
<dbReference type="InterPro" id="IPR023036">
    <property type="entry name" value="Ribosomal_uS14_bac/plastid"/>
</dbReference>
<dbReference type="InterPro" id="IPR018271">
    <property type="entry name" value="Ribosomal_uS14_CS"/>
</dbReference>
<dbReference type="NCBIfam" id="NF006477">
    <property type="entry name" value="PRK08881.1"/>
    <property type="match status" value="1"/>
</dbReference>
<dbReference type="PANTHER" id="PTHR19836">
    <property type="entry name" value="30S RIBOSOMAL PROTEIN S14"/>
    <property type="match status" value="1"/>
</dbReference>
<dbReference type="PANTHER" id="PTHR19836:SF19">
    <property type="entry name" value="SMALL RIBOSOMAL SUBUNIT PROTEIN US14M"/>
    <property type="match status" value="1"/>
</dbReference>
<dbReference type="Pfam" id="PF00253">
    <property type="entry name" value="Ribosomal_S14"/>
    <property type="match status" value="1"/>
</dbReference>
<dbReference type="SUPFAM" id="SSF57716">
    <property type="entry name" value="Glucocorticoid receptor-like (DNA-binding domain)"/>
    <property type="match status" value="1"/>
</dbReference>
<dbReference type="PROSITE" id="PS00527">
    <property type="entry name" value="RIBOSOMAL_S14"/>
    <property type="match status" value="1"/>
</dbReference>
<protein>
    <recommendedName>
        <fullName evidence="1">Small ribosomal subunit protein uS14</fullName>
    </recommendedName>
    <alternativeName>
        <fullName evidence="2">30S ribosomal protein S14</fullName>
    </alternativeName>
</protein>
<sequence length="101" mass="11740">MAKVSAVEKNKRRKMMVMRYAARRARLKAIVMDQKISLEERFKASVQLAELPRNSAKVRVRNRCEVSGRPRAYYRKLKMSRIALRELGSVGYIPGIIKSSW</sequence>
<evidence type="ECO:0000255" key="1">
    <source>
        <dbReference type="HAMAP-Rule" id="MF_00537"/>
    </source>
</evidence>
<evidence type="ECO:0000305" key="2"/>
<gene>
    <name evidence="1" type="primary">rpsN</name>
    <name type="ordered locus">BQ08100</name>
</gene>
<accession>Q6FZD5</accession>